<protein>
    <recommendedName>
        <fullName evidence="1">Photosystem II reaction center protein K</fullName>
        <shortName evidence="1">PSII-K</shortName>
    </recommendedName>
</protein>
<proteinExistence type="inferred from homology"/>
<name>PSBK_PHAAC</name>
<dbReference type="EMBL" id="AF241276">
    <property type="protein sequence ID" value="AAF82439.1"/>
    <property type="molecule type" value="Genomic_DNA"/>
</dbReference>
<dbReference type="SMR" id="Q9MS79"/>
<dbReference type="GO" id="GO:0009535">
    <property type="term" value="C:chloroplast thylakoid membrane"/>
    <property type="evidence" value="ECO:0007669"/>
    <property type="project" value="UniProtKB-SubCell"/>
</dbReference>
<dbReference type="GO" id="GO:0009539">
    <property type="term" value="C:photosystem II reaction center"/>
    <property type="evidence" value="ECO:0007669"/>
    <property type="project" value="InterPro"/>
</dbReference>
<dbReference type="GO" id="GO:0015979">
    <property type="term" value="P:photosynthesis"/>
    <property type="evidence" value="ECO:0007669"/>
    <property type="project" value="UniProtKB-UniRule"/>
</dbReference>
<dbReference type="HAMAP" id="MF_00441">
    <property type="entry name" value="PSII_PsbK"/>
    <property type="match status" value="1"/>
</dbReference>
<dbReference type="InterPro" id="IPR003687">
    <property type="entry name" value="PSII_PsbK"/>
</dbReference>
<dbReference type="InterPro" id="IPR037270">
    <property type="entry name" value="PSII_PsbK_sf"/>
</dbReference>
<dbReference type="NCBIfam" id="NF002715">
    <property type="entry name" value="PRK02553.1"/>
    <property type="match status" value="1"/>
</dbReference>
<dbReference type="PANTHER" id="PTHR35325">
    <property type="match status" value="1"/>
</dbReference>
<dbReference type="PANTHER" id="PTHR35325:SF1">
    <property type="entry name" value="PHOTOSYSTEM II REACTION CENTER PROTEIN K"/>
    <property type="match status" value="1"/>
</dbReference>
<dbReference type="Pfam" id="PF02533">
    <property type="entry name" value="PsbK"/>
    <property type="match status" value="1"/>
</dbReference>
<dbReference type="SUPFAM" id="SSF161037">
    <property type="entry name" value="Photosystem II reaction center protein K, PsbK"/>
    <property type="match status" value="1"/>
</dbReference>
<geneLocation type="chloroplast"/>
<feature type="propeptide" id="PRO_0000432467" evidence="1">
    <location>
        <begin position="1"/>
        <end position="12"/>
    </location>
</feature>
<feature type="chain" id="PRO_0000029508" description="Photosystem II reaction center protein K" evidence="1">
    <location>
        <begin position="13"/>
        <end position="49"/>
    </location>
</feature>
<feature type="transmembrane region" description="Helical" evidence="1">
    <location>
        <begin position="24"/>
        <end position="44"/>
    </location>
</feature>
<reference key="1">
    <citation type="journal article" date="2001" name="Mol. Gen. Genet.">
        <title>Comparison of psbK operon organization and group III intron content in chloroplast genomes of 12 Euglenoid species.</title>
        <authorList>
            <person name="Doetsch N.A."/>
            <person name="Thompson M.D."/>
            <person name="Favreau M.R."/>
            <person name="Hallick R.B."/>
        </authorList>
    </citation>
    <scope>NUCLEOTIDE SEQUENCE [GENOMIC DNA]</scope>
</reference>
<comment type="function">
    <text evidence="1">One of the components of the core complex of photosystem II (PSII). PSII is a light-driven water:plastoquinone oxidoreductase that uses light energy to abstract electrons from H(2)O, generating O(2) and a proton gradient subsequently used for ATP formation. It consists of a core antenna complex that captures photons, and an electron transfer chain that converts photonic excitation into a charge separation.</text>
</comment>
<comment type="subunit">
    <text evidence="1">PSII is composed of 1 copy each of membrane proteins PsbA, PsbB, PsbC, PsbD, PsbE, PsbF, PsbH, PsbI, PsbJ, PsbK, PsbL, PsbM, PsbT, PsbX, PsbY, PsbZ, Psb30/Ycf12, at least 3 peripheral proteins of the oxygen-evolving complex and a large number of cofactors. It forms dimeric complexes.</text>
</comment>
<comment type="subcellular location">
    <subcellularLocation>
        <location evidence="1">Plastid</location>
        <location evidence="1">Chloroplast thylakoid membrane</location>
        <topology evidence="1">Single-pass membrane protein</topology>
    </subcellularLocation>
</comment>
<comment type="similarity">
    <text evidence="1">Belongs to the PsbK family.</text>
</comment>
<keyword id="KW-0150">Chloroplast</keyword>
<keyword id="KW-0472">Membrane</keyword>
<keyword id="KW-0602">Photosynthesis</keyword>
<keyword id="KW-0604">Photosystem II</keyword>
<keyword id="KW-0934">Plastid</keyword>
<keyword id="KW-0674">Reaction center</keyword>
<keyword id="KW-0793">Thylakoid</keyword>
<keyword id="KW-0812">Transmembrane</keyword>
<keyword id="KW-1133">Transmembrane helix</keyword>
<sequence>MISSIHLRKLLGLLPEAYLPFDPIIDVLPIIPVLFLLLAFVWQAAVKFR</sequence>
<accession>Q9MS79</accession>
<evidence type="ECO:0000255" key="1">
    <source>
        <dbReference type="HAMAP-Rule" id="MF_00441"/>
    </source>
</evidence>
<organism>
    <name type="scientific">Phacus acuminatus</name>
    <dbReference type="NCBI Taxonomy" id="130316"/>
    <lineage>
        <taxon>Eukaryota</taxon>
        <taxon>Discoba</taxon>
        <taxon>Euglenozoa</taxon>
        <taxon>Euglenida</taxon>
        <taxon>Spirocuta</taxon>
        <taxon>Euglenophyceae</taxon>
        <taxon>Euglenales</taxon>
        <taxon>Phacaceae</taxon>
        <taxon>Phacus</taxon>
    </lineage>
</organism>
<gene>
    <name evidence="1" type="primary">psbK</name>
</gene>